<dbReference type="EC" id="3.6.4.10" evidence="5"/>
<dbReference type="EMBL" id="AJ719486">
    <property type="protein sequence ID" value="CAG31145.1"/>
    <property type="molecule type" value="mRNA"/>
</dbReference>
<dbReference type="RefSeq" id="NP_001006147.1">
    <property type="nucleotide sequence ID" value="NM_001006147.1"/>
</dbReference>
<dbReference type="SMR" id="Q5ZM98"/>
<dbReference type="BioGRID" id="677728">
    <property type="interactions" value="2"/>
</dbReference>
<dbReference type="FunCoup" id="Q5ZM98">
    <property type="interactions" value="2951"/>
</dbReference>
<dbReference type="STRING" id="9031.ENSGALP00000003717"/>
<dbReference type="PaxDb" id="9031-ENSGALP00000003717"/>
<dbReference type="GeneID" id="416183"/>
<dbReference type="KEGG" id="gga:416183"/>
<dbReference type="CTD" id="3313"/>
<dbReference type="VEuPathDB" id="HostDB:geneid_416183"/>
<dbReference type="eggNOG" id="KOG0102">
    <property type="taxonomic scope" value="Eukaryota"/>
</dbReference>
<dbReference type="InParanoid" id="Q5ZM98"/>
<dbReference type="OrthoDB" id="2401965at2759"/>
<dbReference type="PhylomeDB" id="Q5ZM98"/>
<dbReference type="PRO" id="PR:Q5ZM98"/>
<dbReference type="Proteomes" id="UP000000539">
    <property type="component" value="Unassembled WGS sequence"/>
</dbReference>
<dbReference type="GO" id="GO:0005737">
    <property type="term" value="C:cytoplasm"/>
    <property type="evidence" value="ECO:0000318"/>
    <property type="project" value="GO_Central"/>
</dbReference>
<dbReference type="GO" id="GO:0005739">
    <property type="term" value="C:mitochondrion"/>
    <property type="evidence" value="ECO:0000250"/>
    <property type="project" value="UniProtKB"/>
</dbReference>
<dbReference type="GO" id="GO:0005730">
    <property type="term" value="C:nucleolus"/>
    <property type="evidence" value="ECO:0007669"/>
    <property type="project" value="UniProtKB-SubCell"/>
</dbReference>
<dbReference type="GO" id="GO:0005524">
    <property type="term" value="F:ATP binding"/>
    <property type="evidence" value="ECO:0007669"/>
    <property type="project" value="UniProtKB-KW"/>
</dbReference>
<dbReference type="GO" id="GO:0016887">
    <property type="term" value="F:ATP hydrolysis activity"/>
    <property type="evidence" value="ECO:0000250"/>
    <property type="project" value="UniProtKB"/>
</dbReference>
<dbReference type="GO" id="GO:0140662">
    <property type="term" value="F:ATP-dependent protein folding chaperone"/>
    <property type="evidence" value="ECO:0007669"/>
    <property type="project" value="InterPro"/>
</dbReference>
<dbReference type="GO" id="GO:0031072">
    <property type="term" value="F:heat shock protein binding"/>
    <property type="evidence" value="ECO:0000318"/>
    <property type="project" value="GO_Central"/>
</dbReference>
<dbReference type="GO" id="GO:0044183">
    <property type="term" value="F:protein folding chaperone"/>
    <property type="evidence" value="ECO:0000318"/>
    <property type="project" value="GO_Central"/>
</dbReference>
<dbReference type="GO" id="GO:0051082">
    <property type="term" value="F:unfolded protein binding"/>
    <property type="evidence" value="ECO:0007669"/>
    <property type="project" value="InterPro"/>
</dbReference>
<dbReference type="GO" id="GO:0051085">
    <property type="term" value="P:chaperone cofactor-dependent protein refolding"/>
    <property type="evidence" value="ECO:0000318"/>
    <property type="project" value="GO_Central"/>
</dbReference>
<dbReference type="GO" id="GO:0030218">
    <property type="term" value="P:erythrocyte differentiation"/>
    <property type="evidence" value="ECO:0000250"/>
    <property type="project" value="UniProtKB"/>
</dbReference>
<dbReference type="GO" id="GO:0016226">
    <property type="term" value="P:iron-sulfur cluster assembly"/>
    <property type="evidence" value="ECO:0000250"/>
    <property type="project" value="UniProtKB"/>
</dbReference>
<dbReference type="GO" id="GO:0045647">
    <property type="term" value="P:negative regulation of erythrocyte differentiation"/>
    <property type="evidence" value="ECO:0000250"/>
    <property type="project" value="UniProtKB"/>
</dbReference>
<dbReference type="GO" id="GO:1902037">
    <property type="term" value="P:negative regulation of hematopoietic stem cell differentiation"/>
    <property type="evidence" value="ECO:0000250"/>
    <property type="project" value="UniProtKB"/>
</dbReference>
<dbReference type="GO" id="GO:1903707">
    <property type="term" value="P:negative regulation of hemopoiesis"/>
    <property type="evidence" value="ECO:0000250"/>
    <property type="project" value="UniProtKB"/>
</dbReference>
<dbReference type="GO" id="GO:0042026">
    <property type="term" value="P:protein refolding"/>
    <property type="evidence" value="ECO:0000318"/>
    <property type="project" value="GO_Central"/>
</dbReference>
<dbReference type="GO" id="GO:0045646">
    <property type="term" value="P:regulation of erythrocyte differentiation"/>
    <property type="evidence" value="ECO:0000250"/>
    <property type="project" value="UniProtKB"/>
</dbReference>
<dbReference type="CDD" id="cd11733">
    <property type="entry name" value="ASKHA_NBD_HSP70_HSPA9"/>
    <property type="match status" value="1"/>
</dbReference>
<dbReference type="FunFam" id="2.60.34.10:FF:000014">
    <property type="entry name" value="Chaperone protein DnaK HSP70"/>
    <property type="match status" value="1"/>
</dbReference>
<dbReference type="FunFam" id="3.30.420.40:FF:000020">
    <property type="entry name" value="Chaperone protein HscA homolog"/>
    <property type="match status" value="1"/>
</dbReference>
<dbReference type="FunFam" id="3.30.30.30:FF:000003">
    <property type="entry name" value="Heat shock protein 9"/>
    <property type="match status" value="1"/>
</dbReference>
<dbReference type="FunFam" id="3.30.420.40:FF:000004">
    <property type="entry name" value="Molecular chaperone DnaK"/>
    <property type="match status" value="1"/>
</dbReference>
<dbReference type="FunFam" id="3.90.640.10:FF:000003">
    <property type="entry name" value="Molecular chaperone DnaK"/>
    <property type="match status" value="1"/>
</dbReference>
<dbReference type="FunFam" id="1.20.1270.10:FF:000011">
    <property type="entry name" value="stress-70 protein, mitochondrial isoform X1"/>
    <property type="match status" value="1"/>
</dbReference>
<dbReference type="Gene3D" id="1.20.1270.10">
    <property type="match status" value="1"/>
</dbReference>
<dbReference type="Gene3D" id="3.30.30.30">
    <property type="match status" value="1"/>
</dbReference>
<dbReference type="Gene3D" id="3.30.420.40">
    <property type="match status" value="2"/>
</dbReference>
<dbReference type="Gene3D" id="3.90.640.10">
    <property type="entry name" value="Actin, Chain A, domain 4"/>
    <property type="match status" value="1"/>
</dbReference>
<dbReference type="Gene3D" id="2.60.34.10">
    <property type="entry name" value="Substrate Binding Domain Of DNAk, Chain A, domain 1"/>
    <property type="match status" value="1"/>
</dbReference>
<dbReference type="HAMAP" id="MF_00332">
    <property type="entry name" value="DnaK"/>
    <property type="match status" value="1"/>
</dbReference>
<dbReference type="InterPro" id="IPR043129">
    <property type="entry name" value="ATPase_NBD"/>
</dbReference>
<dbReference type="InterPro" id="IPR012725">
    <property type="entry name" value="Chaperone_DnaK"/>
</dbReference>
<dbReference type="InterPro" id="IPR018181">
    <property type="entry name" value="Heat_shock_70_CS"/>
</dbReference>
<dbReference type="InterPro" id="IPR029048">
    <property type="entry name" value="HSP70_C_sf"/>
</dbReference>
<dbReference type="InterPro" id="IPR029047">
    <property type="entry name" value="HSP70_peptide-bd_sf"/>
</dbReference>
<dbReference type="InterPro" id="IPR013126">
    <property type="entry name" value="Hsp_70_fam"/>
</dbReference>
<dbReference type="NCBIfam" id="NF001413">
    <property type="entry name" value="PRK00290.1"/>
    <property type="match status" value="1"/>
</dbReference>
<dbReference type="NCBIfam" id="NF003520">
    <property type="entry name" value="PRK05183.1"/>
    <property type="match status" value="1"/>
</dbReference>
<dbReference type="NCBIfam" id="TIGR02350">
    <property type="entry name" value="prok_dnaK"/>
    <property type="match status" value="1"/>
</dbReference>
<dbReference type="PANTHER" id="PTHR19375">
    <property type="entry name" value="HEAT SHOCK PROTEIN 70KDA"/>
    <property type="match status" value="1"/>
</dbReference>
<dbReference type="Pfam" id="PF00012">
    <property type="entry name" value="HSP70"/>
    <property type="match status" value="1"/>
</dbReference>
<dbReference type="PRINTS" id="PR00301">
    <property type="entry name" value="HEATSHOCK70"/>
</dbReference>
<dbReference type="SUPFAM" id="SSF53067">
    <property type="entry name" value="Actin-like ATPase domain"/>
    <property type="match status" value="2"/>
</dbReference>
<dbReference type="SUPFAM" id="SSF100920">
    <property type="entry name" value="Heat shock protein 70kD (HSP70), peptide-binding domain"/>
    <property type="match status" value="1"/>
</dbReference>
<dbReference type="PROSITE" id="PS00297">
    <property type="entry name" value="HSP70_1"/>
    <property type="match status" value="1"/>
</dbReference>
<dbReference type="PROSITE" id="PS00329">
    <property type="entry name" value="HSP70_2"/>
    <property type="match status" value="1"/>
</dbReference>
<dbReference type="PROSITE" id="PS01036">
    <property type="entry name" value="HSP70_3"/>
    <property type="match status" value="1"/>
</dbReference>
<keyword id="KW-0067">ATP-binding</keyword>
<keyword id="KW-0143">Chaperone</keyword>
<keyword id="KW-0963">Cytoplasm</keyword>
<keyword id="KW-0378">Hydrolase</keyword>
<keyword id="KW-0496">Mitochondrion</keyword>
<keyword id="KW-0547">Nucleotide-binding</keyword>
<keyword id="KW-0539">Nucleus</keyword>
<keyword id="KW-1185">Reference proteome</keyword>
<keyword id="KW-0809">Transit peptide</keyword>
<organism>
    <name type="scientific">Gallus gallus</name>
    <name type="common">Chicken</name>
    <dbReference type="NCBI Taxonomy" id="9031"/>
    <lineage>
        <taxon>Eukaryota</taxon>
        <taxon>Metazoa</taxon>
        <taxon>Chordata</taxon>
        <taxon>Craniata</taxon>
        <taxon>Vertebrata</taxon>
        <taxon>Euteleostomi</taxon>
        <taxon>Archelosauria</taxon>
        <taxon>Archosauria</taxon>
        <taxon>Dinosauria</taxon>
        <taxon>Saurischia</taxon>
        <taxon>Theropoda</taxon>
        <taxon>Coelurosauria</taxon>
        <taxon>Aves</taxon>
        <taxon>Neognathae</taxon>
        <taxon>Galloanserae</taxon>
        <taxon>Galliformes</taxon>
        <taxon>Phasianidae</taxon>
        <taxon>Phasianinae</taxon>
        <taxon>Gallus</taxon>
    </lineage>
</organism>
<evidence type="ECO:0000250" key="1">
    <source>
        <dbReference type="UniProtKB" id="O35501"/>
    </source>
</evidence>
<evidence type="ECO:0000250" key="2">
    <source>
        <dbReference type="UniProtKB" id="P0CS90"/>
    </source>
</evidence>
<evidence type="ECO:0000250" key="3">
    <source>
        <dbReference type="UniProtKB" id="P0DMV8"/>
    </source>
</evidence>
<evidence type="ECO:0000250" key="4">
    <source>
        <dbReference type="UniProtKB" id="P11021"/>
    </source>
</evidence>
<evidence type="ECO:0000250" key="5">
    <source>
        <dbReference type="UniProtKB" id="P38646"/>
    </source>
</evidence>
<evidence type="ECO:0000250" key="6">
    <source>
        <dbReference type="UniProtKB" id="P38647"/>
    </source>
</evidence>
<evidence type="ECO:0000255" key="7"/>
<evidence type="ECO:0000269" key="8">
    <source>
    </source>
</evidence>
<evidence type="ECO:0000305" key="9"/>
<evidence type="ECO:0000312" key="10">
    <source>
        <dbReference type="EMBL" id="CAG31145.1"/>
    </source>
</evidence>
<reference evidence="9 10" key="1">
    <citation type="journal article" date="2005" name="Genome Biol.">
        <title>Full-length cDNAs from chicken bursal lymphocytes to facilitate gene function analysis.</title>
        <authorList>
            <person name="Caldwell R.B."/>
            <person name="Kierzek A.M."/>
            <person name="Arakawa H."/>
            <person name="Bezzubov Y."/>
            <person name="Zaim J."/>
            <person name="Fiedler P."/>
            <person name="Kutter S."/>
            <person name="Blagodatski A."/>
            <person name="Kostovska D."/>
            <person name="Koter M."/>
            <person name="Plachy J."/>
            <person name="Carninci P."/>
            <person name="Hayashizaki Y."/>
            <person name="Buerstedde J.-M."/>
        </authorList>
    </citation>
    <scope>NUCLEOTIDE SEQUENCE [LARGE SCALE MRNA]</scope>
    <source>
        <strain evidence="10">CB</strain>
        <tissue evidence="10">Bursa of Fabricius</tissue>
    </source>
</reference>
<reference evidence="9" key="2">
    <citation type="journal article" date="2005" name="Proteomics">
        <title>Proteomic analysis of the Gallus gallus embryo at stage-29 of development.</title>
        <authorList>
            <person name="Agudo D."/>
            <person name="Gomez-Esquer F."/>
            <person name="Diaz-Gil G."/>
            <person name="Martinez-Arribas F."/>
            <person name="Delcan J."/>
            <person name="Schneider J."/>
            <person name="Palomar M.A."/>
            <person name="Linares R."/>
        </authorList>
    </citation>
    <scope>IDENTIFICATION</scope>
    <scope>MASS SPECTROMETRY</scope>
    <source>
        <tissue evidence="8">Embryo</tissue>
    </source>
</reference>
<name>HSPA9_CHICK</name>
<feature type="transit peptide" description="Mitochondrion" evidence="5">
    <location>
        <begin position="1"/>
        <end position="48"/>
    </location>
</feature>
<feature type="chain" id="PRO_0000223503" description="Stress-70 protein, mitochondrial">
    <location>
        <begin position="49"/>
        <end position="675"/>
    </location>
</feature>
<feature type="region of interest" description="Nucleotide-binding domain (NBD)" evidence="5">
    <location>
        <begin position="65"/>
        <end position="433"/>
    </location>
</feature>
<feature type="region of interest" description="Interdomain linker" evidence="5">
    <location>
        <begin position="434"/>
        <end position="443"/>
    </location>
</feature>
<feature type="region of interest" description="Substrate-binding domain (SBD)" evidence="5">
    <location>
        <begin position="444"/>
        <end position="675"/>
    </location>
</feature>
<feature type="binding site" evidence="5">
    <location>
        <position position="65"/>
    </location>
    <ligand>
        <name>ADP</name>
        <dbReference type="ChEBI" id="CHEBI:456216"/>
    </ligand>
</feature>
<feature type="binding site" evidence="5">
    <location>
        <position position="66"/>
    </location>
    <ligand>
        <name>ADP</name>
        <dbReference type="ChEBI" id="CHEBI:456216"/>
    </ligand>
</feature>
<feature type="binding site" evidence="5">
    <location>
        <position position="315"/>
    </location>
    <ligand>
        <name>ADP</name>
        <dbReference type="ChEBI" id="CHEBI:456216"/>
    </ligand>
</feature>
<feature type="binding site" evidence="5">
    <location>
        <position position="318"/>
    </location>
    <ligand>
        <name>ADP</name>
        <dbReference type="ChEBI" id="CHEBI:456216"/>
    </ligand>
</feature>
<feature type="binding site" evidence="5">
    <location>
        <position position="322"/>
    </location>
    <ligand>
        <name>ADP</name>
        <dbReference type="ChEBI" id="CHEBI:456216"/>
    </ligand>
</feature>
<feature type="binding site" evidence="5">
    <location>
        <position position="390"/>
    </location>
    <ligand>
        <name>ADP</name>
        <dbReference type="ChEBI" id="CHEBI:456216"/>
    </ligand>
</feature>
<feature type="binding site" evidence="5">
    <location>
        <position position="393"/>
    </location>
    <ligand>
        <name>ADP</name>
        <dbReference type="ChEBI" id="CHEBI:456216"/>
    </ligand>
</feature>
<accession>Q5ZM98</accession>
<accession>P84163</accession>
<protein>
    <recommendedName>
        <fullName>Stress-70 protein, mitochondrial</fullName>
        <ecNumber evidence="5">3.6.4.10</ecNumber>
    </recommendedName>
    <alternativeName>
        <fullName>75 kDa glucose-regulated protein</fullName>
        <shortName>GRP-75</shortName>
    </alternativeName>
    <alternativeName>
        <fullName>Heat shock 70 kDa protein 9</fullName>
    </alternativeName>
</protein>
<sequence length="675" mass="73192">MISASRAAARLPLLLPRGGPVPAVPGLAQTFWNGLSQNVLRAASSRKYASEAIKGAVIGIDLGTTNSCVAVMEGKQAKVLENSEGARTTPSVVAFTADGERLVGMPAKRQAVTNPHNTFYATKRLIGRRFDDSEVKKDIKNVPFKIVRASNGDAWVEAHGKLYSPSQIGAFVLMKMKETAENYLGHPAKNAVITVPAYFNDSQRQATKDAGQISGLNVLRVINEPTAAALAYGLDKSEDKIIAVYDLGGGTFDISILEIQKGVFEVKSTNGDTFLGGEDFDQALLQYIVKEFKRETSVDLTKDNMALQRVREASEKAKCELSSSVQTDINLPYLTMDASGPKHLNMKLSRSQFEGIVADLIKRTVAPCQKAMQDAEVSKSDIGEVILVGGMTRMPKVQQTVQDLFGRAPSKAVNPDEAVAIGAAIQGGVLAGDVTDVLLLDVTPLSLGIETLGGVFTKLINRNTTIPTKKSQVFSTAADGQTQVEIKVCQGEREMASDNKLLGQFTLVGIPPAPRGVPQIEVTFDIDANGIVHVSAKDKGTGREQQIVIQSSGGLSKDEIENMVKNAEKYAEEDRRRKERVEAVNLAEGIIHDTESKMEEFKDQLPADECNKLKEEIAKMRELLARKDTETGENIRQAATSLQQASLKLFEMAYKKMASERESSGSSGDQKEEKQ</sequence>
<proteinExistence type="evidence at protein level"/>
<gene>
    <name evidence="1" type="primary">HSPA9</name>
    <name type="ORF">RCJMB04_2m8</name>
</gene>
<comment type="function">
    <text evidence="2 5 6">Mitochondrial chaperone that plays a key role in mitochondrial protein import, folding, and assembly. Plays an essential role in the protein quality control system, the correct folding of proteins, the re-folding of misfolded proteins, and the targeting of proteins for subsequent degradation. These processes are achieved through cycles of ATP binding, ATP hydrolysis, and ADP release, mediated by co-chaperones. In mitochondria, it associates with the TIM (translocase of the inner membrane) protein complex to assist in the import and folding of mitochondrial proteins (By similarity). Plays an important role in mitochondrial iron-sulfur cluster (ISC) biogenesis, interacts with and stabilizes ISC cluster assembly proteins FXN, NFU1, NFS1 and ISCU. Regulates erythropoiesis via stabilization of ISC assembly. Regulates mitochondrial calcium-dependent apoptosis by coupling two calcium channels, ITPR1 and VDAC1, at the mitochondria-associated endoplasmic reticulum (ER) membrane to facilitate calcium transport from the ER lumen to the mitochondria intermembrane space, providing calcium for the downstream calcium channel MCU, which releases it into the mitochondrial matrix (By similarity). Although primarily located in the mitochondria, it is also found in other cellular compartments. In the cytosol, it associates with proteins involved in signaling, apoptosis, or senescence. It may play a role in cell cycle regulation via its interaction with and promotion of degradation of TP53 (By similarity). May play a role in the control of cell proliferation and cellular aging (By similarity). Protects against reactive oxygen species (ROS) (By similarity). Extracellular HSPA9 plays a cytoprotective role by preventing cell lysis following immune attack by the membrane attack complex by disrupting formation of the complex (By similarity).</text>
</comment>
<comment type="catalytic activity">
    <reaction evidence="5">
        <text>ATP + H2O = ADP + phosphate + H(+)</text>
        <dbReference type="Rhea" id="RHEA:13065"/>
        <dbReference type="ChEBI" id="CHEBI:15377"/>
        <dbReference type="ChEBI" id="CHEBI:15378"/>
        <dbReference type="ChEBI" id="CHEBI:30616"/>
        <dbReference type="ChEBI" id="CHEBI:43474"/>
        <dbReference type="ChEBI" id="CHEBI:456216"/>
        <dbReference type="EC" id="3.6.4.10"/>
    </reaction>
    <physiologicalReaction direction="left-to-right" evidence="5">
        <dbReference type="Rhea" id="RHEA:13066"/>
    </physiologicalReaction>
</comment>
<comment type="activity regulation">
    <text evidence="4 5">The chaperone activity is regulated by ATP-induced allosteric coupling of the nucleotide-binding (NBD) and substrate-binding (SBD) domains. ATP binding in the NBD leads to a conformational change in the NBD, which is transferred through the interdomain linker (IDL) to the substrate-binding domain (SBD). This elicits a reduced substrate affinity and a faster substrate exchange rate. Upon hydrolysis of ATP to ADP, the protein undergoes a conformational change that increases its affinity for substrate proteins. It cycles through repeated phases of ATP hydrolysis and nucleotide exchange, facilitating repeated cycles of substrate binding and release (By similarity). Functions in collaboration with co-chaperones. Functions with the co-chaperone, DNLZ, to maintain solubility and regulate ATP hydrolysis. Nucleotide exchange factors, GRPEL1 and GRPEL2, accelerate nucleotide exchange (By similarity).</text>
</comment>
<comment type="subunit">
    <text evidence="5">Interacts strongly with the intermediate form of FXN and weakly with its mature form. Associates with the mitochondrial contact site and cristae organizing system (MICOS) complex (also known as MINOS or MitOS complex). Component of the TIM23 mitochondrial inner membrane pre-sequence translocase complex (By similarity).</text>
</comment>
<comment type="subcellular location">
    <subcellularLocation>
        <location evidence="5">Mitochondrion</location>
    </subcellularLocation>
    <subcellularLocation>
        <location evidence="5">Nucleus</location>
        <location evidence="5">Nucleolus</location>
    </subcellularLocation>
    <subcellularLocation>
        <location evidence="5">Cytoplasm</location>
    </subcellularLocation>
</comment>
<comment type="domain">
    <text evidence="3">The N-terminal nucleotide binding domain (NBD) is responsible for binding and hydrolyzing ATP. The C-terminal substrate-binding domain (SBD) binds to the client/substrate proteins. The two domains are allosterically coupled so that, when ATP is bound to the NBD, the SBD binds relatively weakly to clients. When ADP is bound in the NBD, a conformational change enhances the affinity of the SBD for client proteins.</text>
</comment>
<comment type="mass spectrometry" mass="73967.0" error="2.0" method="MALDI" evidence="8"/>
<comment type="similarity">
    <text evidence="7">Belongs to the heat shock protein 70 family.</text>
</comment>